<protein>
    <recommendedName>
        <fullName evidence="1">Ribonuclease H</fullName>
        <shortName evidence="1">RNase H</shortName>
        <ecNumber evidence="1">3.1.26.4</ecNumber>
    </recommendedName>
</protein>
<gene>
    <name evidence="1" type="primary">rnhA</name>
    <name type="ordered locus">Cpar_0574</name>
</gene>
<keyword id="KW-0963">Cytoplasm</keyword>
<keyword id="KW-0255">Endonuclease</keyword>
<keyword id="KW-0378">Hydrolase</keyword>
<keyword id="KW-0460">Magnesium</keyword>
<keyword id="KW-0479">Metal-binding</keyword>
<keyword id="KW-0540">Nuclease</keyword>
<accession>B3QM41</accession>
<proteinExistence type="inferred from homology"/>
<sequence length="146" mass="16596">MEKTITIYTDGACSGNPGKGGWGALLMYGNTRKEISGYDPATTNNRMEMMAAIRALEALKEPCRVELYSDSAYLVNAMNQGWLKRWLKNGWKTASKKPVENIDLWQEIVKLTTLHRVTFHKVKGHSDNQYNNRCDELARLAIKEQS</sequence>
<feature type="chain" id="PRO_1000090894" description="Ribonuclease H">
    <location>
        <begin position="1"/>
        <end position="146"/>
    </location>
</feature>
<feature type="domain" description="RNase H type-1" evidence="2">
    <location>
        <begin position="1"/>
        <end position="143"/>
    </location>
</feature>
<feature type="binding site" evidence="1">
    <location>
        <position position="10"/>
    </location>
    <ligand>
        <name>Mg(2+)</name>
        <dbReference type="ChEBI" id="CHEBI:18420"/>
        <label>1</label>
    </ligand>
</feature>
<feature type="binding site" evidence="1">
    <location>
        <position position="10"/>
    </location>
    <ligand>
        <name>Mg(2+)</name>
        <dbReference type="ChEBI" id="CHEBI:18420"/>
        <label>2</label>
    </ligand>
</feature>
<feature type="binding site" evidence="1">
    <location>
        <position position="48"/>
    </location>
    <ligand>
        <name>Mg(2+)</name>
        <dbReference type="ChEBI" id="CHEBI:18420"/>
        <label>1</label>
    </ligand>
</feature>
<feature type="binding site" evidence="1">
    <location>
        <position position="70"/>
    </location>
    <ligand>
        <name>Mg(2+)</name>
        <dbReference type="ChEBI" id="CHEBI:18420"/>
        <label>1</label>
    </ligand>
</feature>
<feature type="binding site" evidence="1">
    <location>
        <position position="135"/>
    </location>
    <ligand>
        <name>Mg(2+)</name>
        <dbReference type="ChEBI" id="CHEBI:18420"/>
        <label>2</label>
    </ligand>
</feature>
<name>RNH_CHLP8</name>
<evidence type="ECO:0000255" key="1">
    <source>
        <dbReference type="HAMAP-Rule" id="MF_00042"/>
    </source>
</evidence>
<evidence type="ECO:0000255" key="2">
    <source>
        <dbReference type="PROSITE-ProRule" id="PRU00408"/>
    </source>
</evidence>
<organism>
    <name type="scientific">Chlorobaculum parvum (strain DSM 263 / NCIMB 8327)</name>
    <name type="common">Chlorobium vibrioforme subsp. thiosulfatophilum</name>
    <dbReference type="NCBI Taxonomy" id="517417"/>
    <lineage>
        <taxon>Bacteria</taxon>
        <taxon>Pseudomonadati</taxon>
        <taxon>Chlorobiota</taxon>
        <taxon>Chlorobiia</taxon>
        <taxon>Chlorobiales</taxon>
        <taxon>Chlorobiaceae</taxon>
        <taxon>Chlorobaculum</taxon>
    </lineage>
</organism>
<dbReference type="EC" id="3.1.26.4" evidence="1"/>
<dbReference type="EMBL" id="CP001099">
    <property type="protein sequence ID" value="ACF10994.1"/>
    <property type="molecule type" value="Genomic_DNA"/>
</dbReference>
<dbReference type="RefSeq" id="WP_012501827.1">
    <property type="nucleotide sequence ID" value="NC_011027.1"/>
</dbReference>
<dbReference type="SMR" id="B3QM41"/>
<dbReference type="STRING" id="517417.Cpar_0574"/>
<dbReference type="KEGG" id="cpc:Cpar_0574"/>
<dbReference type="eggNOG" id="COG0328">
    <property type="taxonomic scope" value="Bacteria"/>
</dbReference>
<dbReference type="HOGENOM" id="CLU_030894_6_2_10"/>
<dbReference type="OrthoDB" id="7845843at2"/>
<dbReference type="Proteomes" id="UP000008811">
    <property type="component" value="Chromosome"/>
</dbReference>
<dbReference type="GO" id="GO:0005737">
    <property type="term" value="C:cytoplasm"/>
    <property type="evidence" value="ECO:0007669"/>
    <property type="project" value="UniProtKB-SubCell"/>
</dbReference>
<dbReference type="GO" id="GO:0000287">
    <property type="term" value="F:magnesium ion binding"/>
    <property type="evidence" value="ECO:0007669"/>
    <property type="project" value="UniProtKB-UniRule"/>
</dbReference>
<dbReference type="GO" id="GO:0003676">
    <property type="term" value="F:nucleic acid binding"/>
    <property type="evidence" value="ECO:0007669"/>
    <property type="project" value="InterPro"/>
</dbReference>
<dbReference type="GO" id="GO:0004523">
    <property type="term" value="F:RNA-DNA hybrid ribonuclease activity"/>
    <property type="evidence" value="ECO:0007669"/>
    <property type="project" value="UniProtKB-UniRule"/>
</dbReference>
<dbReference type="GO" id="GO:0043137">
    <property type="term" value="P:DNA replication, removal of RNA primer"/>
    <property type="evidence" value="ECO:0007669"/>
    <property type="project" value="TreeGrafter"/>
</dbReference>
<dbReference type="CDD" id="cd09278">
    <property type="entry name" value="RNase_HI_prokaryote_like"/>
    <property type="match status" value="1"/>
</dbReference>
<dbReference type="FunFam" id="3.30.420.10:FF:000089">
    <property type="entry name" value="Ribonuclease H"/>
    <property type="match status" value="1"/>
</dbReference>
<dbReference type="Gene3D" id="3.30.420.10">
    <property type="entry name" value="Ribonuclease H-like superfamily/Ribonuclease H"/>
    <property type="match status" value="1"/>
</dbReference>
<dbReference type="HAMAP" id="MF_00042">
    <property type="entry name" value="RNase_H"/>
    <property type="match status" value="1"/>
</dbReference>
<dbReference type="InterPro" id="IPR050092">
    <property type="entry name" value="RNase_H"/>
</dbReference>
<dbReference type="InterPro" id="IPR012337">
    <property type="entry name" value="RNaseH-like_sf"/>
</dbReference>
<dbReference type="InterPro" id="IPR002156">
    <property type="entry name" value="RNaseH_domain"/>
</dbReference>
<dbReference type="InterPro" id="IPR036397">
    <property type="entry name" value="RNaseH_sf"/>
</dbReference>
<dbReference type="InterPro" id="IPR022892">
    <property type="entry name" value="RNaseHI"/>
</dbReference>
<dbReference type="NCBIfam" id="NF001236">
    <property type="entry name" value="PRK00203.1"/>
    <property type="match status" value="1"/>
</dbReference>
<dbReference type="PANTHER" id="PTHR10642">
    <property type="entry name" value="RIBONUCLEASE H1"/>
    <property type="match status" value="1"/>
</dbReference>
<dbReference type="PANTHER" id="PTHR10642:SF26">
    <property type="entry name" value="RIBONUCLEASE H1"/>
    <property type="match status" value="1"/>
</dbReference>
<dbReference type="Pfam" id="PF00075">
    <property type="entry name" value="RNase_H"/>
    <property type="match status" value="1"/>
</dbReference>
<dbReference type="SUPFAM" id="SSF53098">
    <property type="entry name" value="Ribonuclease H-like"/>
    <property type="match status" value="1"/>
</dbReference>
<dbReference type="PROSITE" id="PS50879">
    <property type="entry name" value="RNASE_H_1"/>
    <property type="match status" value="1"/>
</dbReference>
<reference key="1">
    <citation type="submission" date="2008-06" db="EMBL/GenBank/DDBJ databases">
        <title>Complete sequence of Chlorobaculum parvum NCIB 8327.</title>
        <authorList>
            <consortium name="US DOE Joint Genome Institute"/>
            <person name="Lucas S."/>
            <person name="Copeland A."/>
            <person name="Lapidus A."/>
            <person name="Glavina del Rio T."/>
            <person name="Dalin E."/>
            <person name="Tice H."/>
            <person name="Bruce D."/>
            <person name="Goodwin L."/>
            <person name="Pitluck S."/>
            <person name="Schmutz J."/>
            <person name="Larimer F."/>
            <person name="Land M."/>
            <person name="Hauser L."/>
            <person name="Kyrpides N."/>
            <person name="Mikhailova N."/>
            <person name="Zhao F."/>
            <person name="Li T."/>
            <person name="Liu Z."/>
            <person name="Overmann J."/>
            <person name="Bryant D.A."/>
            <person name="Richardson P."/>
        </authorList>
    </citation>
    <scope>NUCLEOTIDE SEQUENCE [LARGE SCALE GENOMIC DNA]</scope>
    <source>
        <strain>DSM 263 / NCIMB 8327</strain>
    </source>
</reference>
<comment type="function">
    <text evidence="1">Endonuclease that specifically degrades the RNA of RNA-DNA hybrids.</text>
</comment>
<comment type="catalytic activity">
    <reaction evidence="1">
        <text>Endonucleolytic cleavage to 5'-phosphomonoester.</text>
        <dbReference type="EC" id="3.1.26.4"/>
    </reaction>
</comment>
<comment type="cofactor">
    <cofactor evidence="1">
        <name>Mg(2+)</name>
        <dbReference type="ChEBI" id="CHEBI:18420"/>
    </cofactor>
    <text evidence="1">Binds 1 Mg(2+) ion per subunit. May bind a second metal ion at a regulatory site, or after substrate binding.</text>
</comment>
<comment type="subunit">
    <text evidence="1">Monomer.</text>
</comment>
<comment type="subcellular location">
    <subcellularLocation>
        <location evidence="1">Cytoplasm</location>
    </subcellularLocation>
</comment>
<comment type="similarity">
    <text evidence="1">Belongs to the RNase H family.</text>
</comment>